<reference key="1">
    <citation type="submission" date="2004-11" db="EMBL/GenBank/DDBJ databases">
        <authorList>
            <consortium name="The German cDNA consortium"/>
        </authorList>
    </citation>
    <scope>NUCLEOTIDE SEQUENCE [LARGE SCALE MRNA]</scope>
    <source>
        <tissue>Liver</tissue>
    </source>
</reference>
<keyword id="KW-1003">Cell membrane</keyword>
<keyword id="KW-0406">Ion transport</keyword>
<keyword id="KW-0472">Membrane</keyword>
<keyword id="KW-1185">Reference proteome</keyword>
<keyword id="KW-0812">Transmembrane</keyword>
<keyword id="KW-1133">Transmembrane helix</keyword>
<keyword id="KW-0813">Transport</keyword>
<dbReference type="EMBL" id="CR861035">
    <property type="protein sequence ID" value="CAH93126.1"/>
    <property type="molecule type" value="mRNA"/>
</dbReference>
<dbReference type="RefSeq" id="NP_001127633.1">
    <property type="nucleotide sequence ID" value="NM_001134161.1"/>
</dbReference>
<dbReference type="SMR" id="Q5R540"/>
<dbReference type="FunCoup" id="Q5R540">
    <property type="interactions" value="75"/>
</dbReference>
<dbReference type="STRING" id="9601.ENSPPYP00000018610"/>
<dbReference type="Ensembl" id="ENSPPYT00000036745.1">
    <property type="protein sequence ID" value="ENSPPYP00000029437.1"/>
    <property type="gene ID" value="ENSPPYG00000016637.3"/>
</dbReference>
<dbReference type="GeneID" id="100174712"/>
<dbReference type="KEGG" id="pon:100174712"/>
<dbReference type="CTD" id="10864"/>
<dbReference type="eggNOG" id="KOG0255">
    <property type="taxonomic scope" value="Eukaryota"/>
</dbReference>
<dbReference type="GeneTree" id="ENSGT00940000154922"/>
<dbReference type="HOGENOM" id="CLU_001265_33_3_1"/>
<dbReference type="InParanoid" id="Q5R540"/>
<dbReference type="OMA" id="AWMVIFF"/>
<dbReference type="OrthoDB" id="2544694at2759"/>
<dbReference type="Proteomes" id="UP000001595">
    <property type="component" value="Chromosome 6"/>
</dbReference>
<dbReference type="GO" id="GO:0016324">
    <property type="term" value="C:apical plasma membrane"/>
    <property type="evidence" value="ECO:0000250"/>
    <property type="project" value="UniProtKB"/>
</dbReference>
<dbReference type="GO" id="GO:0009925">
    <property type="term" value="C:basal plasma membrane"/>
    <property type="evidence" value="ECO:0000250"/>
    <property type="project" value="UniProtKB"/>
</dbReference>
<dbReference type="GO" id="GO:0016323">
    <property type="term" value="C:basolateral plasma membrane"/>
    <property type="evidence" value="ECO:0000250"/>
    <property type="project" value="UniProtKB"/>
</dbReference>
<dbReference type="GO" id="GO:0005886">
    <property type="term" value="C:plasma membrane"/>
    <property type="evidence" value="ECO:0000250"/>
    <property type="project" value="UniProtKB"/>
</dbReference>
<dbReference type="GO" id="GO:0015139">
    <property type="term" value="F:alpha-ketoglutarate transmembrane transporter activity"/>
    <property type="evidence" value="ECO:0000250"/>
    <property type="project" value="UniProtKB"/>
</dbReference>
<dbReference type="GO" id="GO:0008514">
    <property type="term" value="F:organic anion transmembrane transporter activity"/>
    <property type="evidence" value="ECO:0000250"/>
    <property type="project" value="UniProtKB"/>
</dbReference>
<dbReference type="GO" id="GO:0015132">
    <property type="term" value="F:prostaglandin transmembrane transporter activity"/>
    <property type="evidence" value="ECO:0000250"/>
    <property type="project" value="UniProtKB"/>
</dbReference>
<dbReference type="GO" id="GO:0015347">
    <property type="term" value="F:sodium-independent organic anion transmembrane transporter activity"/>
    <property type="evidence" value="ECO:0000250"/>
    <property type="project" value="UniProtKB"/>
</dbReference>
<dbReference type="GO" id="GO:0022857">
    <property type="term" value="F:transmembrane transporter activity"/>
    <property type="evidence" value="ECO:0000250"/>
    <property type="project" value="UniProtKB"/>
</dbReference>
<dbReference type="GO" id="GO:0015742">
    <property type="term" value="P:alpha-ketoglutarate transport"/>
    <property type="evidence" value="ECO:0000250"/>
    <property type="project" value="UniProtKB"/>
</dbReference>
<dbReference type="GO" id="GO:0006811">
    <property type="term" value="P:monoatomic ion transport"/>
    <property type="evidence" value="ECO:0007669"/>
    <property type="project" value="UniProtKB-KW"/>
</dbReference>
<dbReference type="GO" id="GO:0015732">
    <property type="term" value="P:prostaglandin transport"/>
    <property type="evidence" value="ECO:0000250"/>
    <property type="project" value="UniProtKB"/>
</dbReference>
<dbReference type="FunFam" id="1.20.1250.20:FF:000170">
    <property type="entry name" value="Solute carrier family 22 member 7"/>
    <property type="match status" value="1"/>
</dbReference>
<dbReference type="Gene3D" id="1.20.1250.20">
    <property type="entry name" value="MFS general substrate transporter like domains"/>
    <property type="match status" value="1"/>
</dbReference>
<dbReference type="InterPro" id="IPR011701">
    <property type="entry name" value="MFS"/>
</dbReference>
<dbReference type="InterPro" id="IPR020846">
    <property type="entry name" value="MFS_dom"/>
</dbReference>
<dbReference type="InterPro" id="IPR036259">
    <property type="entry name" value="MFS_trans_sf"/>
</dbReference>
<dbReference type="InterPro" id="IPR004749">
    <property type="entry name" value="Orgcat_transp/SVOP"/>
</dbReference>
<dbReference type="NCBIfam" id="TIGR00898">
    <property type="entry name" value="2A0119"/>
    <property type="match status" value="1"/>
</dbReference>
<dbReference type="PANTHER" id="PTHR24064">
    <property type="entry name" value="SOLUTE CARRIER FAMILY 22 MEMBER"/>
    <property type="match status" value="1"/>
</dbReference>
<dbReference type="Pfam" id="PF07690">
    <property type="entry name" value="MFS_1"/>
    <property type="match status" value="1"/>
</dbReference>
<dbReference type="SUPFAM" id="SSF103473">
    <property type="entry name" value="MFS general substrate transporter"/>
    <property type="match status" value="1"/>
</dbReference>
<dbReference type="PROSITE" id="PS50850">
    <property type="entry name" value="MFS"/>
    <property type="match status" value="1"/>
</dbReference>
<feature type="chain" id="PRO_0000317484" description="Solute carrier family 22 member 7">
    <location>
        <begin position="1"/>
        <end position="548"/>
    </location>
</feature>
<feature type="transmembrane region" description="Helical" evidence="3">
    <location>
        <begin position="21"/>
        <end position="41"/>
    </location>
</feature>
<feature type="transmembrane region" description="Helical" evidence="3">
    <location>
        <begin position="146"/>
        <end position="166"/>
    </location>
</feature>
<feature type="transmembrane region" description="Helical" evidence="3">
    <location>
        <begin position="180"/>
        <end position="200"/>
    </location>
</feature>
<feature type="transmembrane region" description="Helical" evidence="3">
    <location>
        <begin position="204"/>
        <end position="224"/>
    </location>
</feature>
<feature type="transmembrane region" description="Helical" evidence="3">
    <location>
        <begin position="234"/>
        <end position="254"/>
    </location>
</feature>
<feature type="transmembrane region" description="Helical" evidence="3">
    <location>
        <begin position="259"/>
        <end position="279"/>
    </location>
</feature>
<feature type="transmembrane region" description="Helical" evidence="3">
    <location>
        <begin position="346"/>
        <end position="366"/>
    </location>
</feature>
<feature type="transmembrane region" description="Helical" evidence="3">
    <location>
        <begin position="376"/>
        <end position="397"/>
    </location>
</feature>
<feature type="transmembrane region" description="Helical" evidence="3">
    <location>
        <begin position="404"/>
        <end position="423"/>
    </location>
</feature>
<feature type="transmembrane region" description="Helical" evidence="3">
    <location>
        <begin position="432"/>
        <end position="452"/>
    </location>
</feature>
<feature type="transmembrane region" description="Helical" evidence="3">
    <location>
        <begin position="466"/>
        <end position="486"/>
    </location>
</feature>
<feature type="transmembrane region" description="Helical" evidence="3">
    <location>
        <begin position="493"/>
        <end position="513"/>
    </location>
</feature>
<feature type="region of interest" description="Disordered" evidence="4">
    <location>
        <begin position="522"/>
        <end position="548"/>
    </location>
</feature>
<name>S22A7_PONAB</name>
<sequence length="548" mass="60043">MGFEELLEQVGGFGPFQLRNVALLALPRVLLPLHFLLPIFLAAVPAHRCALPGAPANFSHQDVWLEAHLPREPDGTLSSCLRFAYPQALPNTTLGEERQSRGELEDEPATVPCSQGWEYDRSEFSSTIATESQWDLVCEQKGLNRAASTFFFAGVLVGAVAFGYLSDRFGRRRLLLVAYVSTLVLGLASAASVSYVMFAITRTLTGSALAGFTIIVMPLELEWLDVEHRTVAGVLSSTFWTGGMMLLALVGYLIRDWRWLLLAVTLPCAPGILSLWWVPESARWLLTQGHVKEAHRYLLHCARLNGRPVCEDSLSQEAVSKVAAGERVVRRPSYLDLFRTPRLRHISLCCVVVWFGVNFSYYGLSLDVSGLGLNVYQTQLLFGAVELPSKLLVYLSVRYAGRRLTQAGTLLGTALAFGTRLLVSSDMKSWSTVLAVMGKAFSEAAFTTAYLFTSELYPTVLRQTGMGLTALVGRLGGSLAPLAALLDGVWLSLPKLTYGGIALLAAGTALLLPETRQAQLPETIQDVERKSAPTSLQEEEMPMKQVQN</sequence>
<comment type="function">
    <text evidence="2">Functions as a Na(+)-independent bidirectional multispecific transporter. Contributes to the renal and hepatic elimination of endogenous organic compounds from the systemic circulation into the urine and bile, respectively. Capable of transporting a wide range of purine and pyrimidine nucleobases, nucleosides and nucleotides, with cGMP, 2'deoxyguanosine and GMP being the preferred substrates. Functions as a pH- and chloride-independent cGMP bidirectional facilitative transporter that can regulate both intracellular and extracellular levels of cGMP and may be involved in cGMP signaling pathways. Mediates orotate/glutamate bidirectional exchange and most likely display a physiological role in hepatic release of glutamate into the blood. Involved in renal secretion and possible reabsorption of creatinine. Able to uptake prostaglandin E2 (PGE2) and may contribute to PGE2 renal excretion. Also transports alpha-ketoglutarate and urate. Apart from the orotate/glutamate exchange, the counterions for the uptake of other SLC22A7/OAT2 substrates remain to be identified.</text>
</comment>
<comment type="catalytic activity">
    <reaction evidence="2">
        <text>orotate(out) + L-glutamate(in) = orotate(in) + L-glutamate(out)</text>
        <dbReference type="Rhea" id="RHEA:72043"/>
        <dbReference type="ChEBI" id="CHEBI:29985"/>
        <dbReference type="ChEBI" id="CHEBI:30839"/>
    </reaction>
</comment>
<comment type="catalytic activity">
    <reaction evidence="2">
        <text>3',5'-cyclic GMP(in) = 3',5'-cyclic GMP(out)</text>
        <dbReference type="Rhea" id="RHEA:76207"/>
        <dbReference type="ChEBI" id="CHEBI:57746"/>
    </reaction>
</comment>
<comment type="catalytic activity">
    <reaction evidence="2">
        <text>GMP(in) = GMP(out)</text>
        <dbReference type="Rhea" id="RHEA:76211"/>
        <dbReference type="ChEBI" id="CHEBI:58115"/>
    </reaction>
</comment>
<comment type="catalytic activity">
    <reaction evidence="2">
        <text>2'-deoxyguanosine(in) = 2'-deoxyguanosine(out)</text>
        <dbReference type="Rhea" id="RHEA:76215"/>
        <dbReference type="ChEBI" id="CHEBI:17172"/>
    </reaction>
</comment>
<comment type="catalytic activity">
    <reaction evidence="2">
        <text>GDP(in) = GDP(out)</text>
        <dbReference type="Rhea" id="RHEA:76219"/>
        <dbReference type="ChEBI" id="CHEBI:58189"/>
    </reaction>
</comment>
<comment type="catalytic activity">
    <reaction evidence="2">
        <text>guanosine(in) = guanosine(out)</text>
        <dbReference type="Rhea" id="RHEA:75371"/>
        <dbReference type="ChEBI" id="CHEBI:16750"/>
    </reaction>
</comment>
<comment type="catalytic activity">
    <reaction evidence="2">
        <text>GTP(in) = GTP(out)</text>
        <dbReference type="Rhea" id="RHEA:75787"/>
        <dbReference type="ChEBI" id="CHEBI:37565"/>
    </reaction>
</comment>
<comment type="catalytic activity">
    <reaction evidence="2">
        <text>3',5'-cyclic AMP(in) = 3',5'-cyclic AMP(out)</text>
        <dbReference type="Rhea" id="RHEA:76223"/>
        <dbReference type="ChEBI" id="CHEBI:58165"/>
    </reaction>
</comment>
<comment type="catalytic activity">
    <reaction evidence="2">
        <text>creatinine(in) = creatinine(out)</text>
        <dbReference type="Rhea" id="RHEA:74539"/>
        <dbReference type="ChEBI" id="CHEBI:16737"/>
    </reaction>
</comment>
<comment type="catalytic activity">
    <reaction evidence="2">
        <text>prostaglandin E2(out) = prostaglandin E2(in)</text>
        <dbReference type="Rhea" id="RHEA:50984"/>
        <dbReference type="ChEBI" id="CHEBI:606564"/>
    </reaction>
</comment>
<comment type="catalytic activity">
    <reaction evidence="2">
        <text>2-oxoglutarate(in) = 2-oxoglutarate(out)</text>
        <dbReference type="Rhea" id="RHEA:76231"/>
        <dbReference type="ChEBI" id="CHEBI:16810"/>
    </reaction>
</comment>
<comment type="catalytic activity">
    <reaction evidence="1">
        <text>glutarate(in) = glutarate(out)</text>
        <dbReference type="Rhea" id="RHEA:76251"/>
        <dbReference type="ChEBI" id="CHEBI:30921"/>
    </reaction>
</comment>
<comment type="catalytic activity">
    <reaction evidence="2">
        <text>urate(out) = urate(in)</text>
        <dbReference type="Rhea" id="RHEA:60368"/>
        <dbReference type="ChEBI" id="CHEBI:17775"/>
    </reaction>
</comment>
<comment type="catalytic activity">
    <reaction evidence="2">
        <text>estrone 3-sulfate(out) = estrone 3-sulfate(in)</text>
        <dbReference type="Rhea" id="RHEA:71835"/>
        <dbReference type="ChEBI" id="CHEBI:60050"/>
    </reaction>
</comment>
<comment type="subcellular location">
    <subcellularLocation>
        <location evidence="2">Basolateral cell membrane</location>
        <topology evidence="5">Multi-pass membrane protein</topology>
    </subcellularLocation>
    <subcellularLocation>
        <location evidence="2">Apical cell membrane</location>
        <topology evidence="5">Multi-pass membrane protein</topology>
    </subcellularLocation>
    <subcellularLocation>
        <location evidence="2">Cell membrane</location>
        <topology evidence="5">Multi-pass membrane protein</topology>
    </subcellularLocation>
</comment>
<comment type="similarity">
    <text evidence="5">Belongs to the major facilitator (TC 2.A.1) superfamily. Organic cation transporter (TC 2.A.1.19) family.</text>
</comment>
<accession>Q5R540</accession>
<organism>
    <name type="scientific">Pongo abelii</name>
    <name type="common">Sumatran orangutan</name>
    <name type="synonym">Pongo pygmaeus abelii</name>
    <dbReference type="NCBI Taxonomy" id="9601"/>
    <lineage>
        <taxon>Eukaryota</taxon>
        <taxon>Metazoa</taxon>
        <taxon>Chordata</taxon>
        <taxon>Craniata</taxon>
        <taxon>Vertebrata</taxon>
        <taxon>Euteleostomi</taxon>
        <taxon>Mammalia</taxon>
        <taxon>Eutheria</taxon>
        <taxon>Euarchontoglires</taxon>
        <taxon>Primates</taxon>
        <taxon>Haplorrhini</taxon>
        <taxon>Catarrhini</taxon>
        <taxon>Hominidae</taxon>
        <taxon>Pongo</taxon>
    </lineage>
</organism>
<gene>
    <name type="primary">SLC22A7</name>
    <name type="synonym">OAT2</name>
</gene>
<evidence type="ECO:0000250" key="1">
    <source>
        <dbReference type="UniProtKB" id="Q91WU2"/>
    </source>
</evidence>
<evidence type="ECO:0000250" key="2">
    <source>
        <dbReference type="UniProtKB" id="Q9Y694"/>
    </source>
</evidence>
<evidence type="ECO:0000255" key="3"/>
<evidence type="ECO:0000256" key="4">
    <source>
        <dbReference type="SAM" id="MobiDB-lite"/>
    </source>
</evidence>
<evidence type="ECO:0000305" key="5"/>
<proteinExistence type="evidence at transcript level"/>
<protein>
    <recommendedName>
        <fullName evidence="2">Solute carrier family 22 member 7</fullName>
    </recommendedName>
    <alternativeName>
        <fullName evidence="2">Organic anion transporter 2</fullName>
    </alternativeName>
</protein>